<keyword id="KW-1185">Reference proteome</keyword>
<organism>
    <name type="scientific">Methanoregula boonei (strain DSM 21154 / JCM 14090 / 6A8)</name>
    <dbReference type="NCBI Taxonomy" id="456442"/>
    <lineage>
        <taxon>Archaea</taxon>
        <taxon>Methanobacteriati</taxon>
        <taxon>Methanobacteriota</taxon>
        <taxon>Stenosarchaea group</taxon>
        <taxon>Methanomicrobia</taxon>
        <taxon>Methanomicrobiales</taxon>
        <taxon>Methanoregulaceae</taxon>
        <taxon>Methanoregula</taxon>
    </lineage>
</organism>
<sequence>MPDYLVTLESAWYIKEAKTLDDAIGIAISEAGKRLNPSAKFVEVEAGMLACPFCERELSSAIVVADTALVGLILEMKVFRAESKEHASRIAKSVIGKALHEIPLKLLDVQEL</sequence>
<feature type="chain" id="PRO_1000066786" description="UPF0212 protein Mboo_1659">
    <location>
        <begin position="1"/>
        <end position="112"/>
    </location>
</feature>
<reference key="1">
    <citation type="journal article" date="2015" name="Microbiology">
        <title>Genome of Methanoregula boonei 6A8 reveals adaptations to oligotrophic peatland environments.</title>
        <authorList>
            <person name="Braeuer S."/>
            <person name="Cadillo-Quiroz H."/>
            <person name="Kyrpides N."/>
            <person name="Woyke T."/>
            <person name="Goodwin L."/>
            <person name="Detter C."/>
            <person name="Podell S."/>
            <person name="Yavitt J.B."/>
            <person name="Zinder S.H."/>
        </authorList>
    </citation>
    <scope>NUCLEOTIDE SEQUENCE [LARGE SCALE GENOMIC DNA]</scope>
    <source>
        <strain>DSM 21154 / JCM 14090 / 6A8</strain>
    </source>
</reference>
<accession>A7I8W5</accession>
<name>Y1659_METB6</name>
<gene>
    <name type="ordered locus">Mboo_1659</name>
</gene>
<dbReference type="EMBL" id="CP000780">
    <property type="protein sequence ID" value="ABS56176.1"/>
    <property type="molecule type" value="Genomic_DNA"/>
</dbReference>
<dbReference type="RefSeq" id="WP_012107222.1">
    <property type="nucleotide sequence ID" value="NC_009712.1"/>
</dbReference>
<dbReference type="STRING" id="456442.Mboo_1659"/>
<dbReference type="GeneID" id="5410568"/>
<dbReference type="KEGG" id="mbn:Mboo_1659"/>
<dbReference type="eggNOG" id="arCOG02119">
    <property type="taxonomic scope" value="Archaea"/>
</dbReference>
<dbReference type="HOGENOM" id="CLU_138334_0_0_2"/>
<dbReference type="OrthoDB" id="63517at2157"/>
<dbReference type="Proteomes" id="UP000002408">
    <property type="component" value="Chromosome"/>
</dbReference>
<dbReference type="HAMAP" id="MF_01223">
    <property type="entry name" value="UPF0212"/>
    <property type="match status" value="1"/>
</dbReference>
<dbReference type="InterPro" id="IPR007564">
    <property type="entry name" value="UPF0212"/>
</dbReference>
<dbReference type="NCBIfam" id="NF003035">
    <property type="entry name" value="PRK03922.1"/>
    <property type="match status" value="1"/>
</dbReference>
<dbReference type="PANTHER" id="PTHR42199">
    <property type="entry name" value="UPF0212 PROTEIN MJ0068"/>
    <property type="match status" value="1"/>
</dbReference>
<dbReference type="PANTHER" id="PTHR42199:SF1">
    <property type="entry name" value="UPF0212 PROTEIN TK1194"/>
    <property type="match status" value="1"/>
</dbReference>
<dbReference type="Pfam" id="PF04475">
    <property type="entry name" value="DUF555"/>
    <property type="match status" value="1"/>
</dbReference>
<dbReference type="PIRSF" id="PIRSF016934">
    <property type="entry name" value="UCP016934"/>
    <property type="match status" value="1"/>
</dbReference>
<evidence type="ECO:0000255" key="1">
    <source>
        <dbReference type="HAMAP-Rule" id="MF_01223"/>
    </source>
</evidence>
<comment type="similarity">
    <text evidence="1">Belongs to the UPF0212 family.</text>
</comment>
<proteinExistence type="inferred from homology"/>
<protein>
    <recommendedName>
        <fullName evidence="1">UPF0212 protein Mboo_1659</fullName>
    </recommendedName>
</protein>